<evidence type="ECO:0000255" key="1">
    <source>
        <dbReference type="HAMAP-Rule" id="MF_01058"/>
    </source>
</evidence>
<evidence type="ECO:0000256" key="2">
    <source>
        <dbReference type="SAM" id="MobiDB-lite"/>
    </source>
</evidence>
<feature type="chain" id="PRO_0000209584" description="Der GTPase-activating protein YihI">
    <location>
        <begin position="1"/>
        <end position="169"/>
    </location>
</feature>
<feature type="region of interest" description="Disordered" evidence="2">
    <location>
        <begin position="1"/>
        <end position="100"/>
    </location>
</feature>
<feature type="region of interest" description="Disordered" evidence="2">
    <location>
        <begin position="144"/>
        <end position="169"/>
    </location>
</feature>
<feature type="compositionally biased region" description="Basic residues" evidence="2">
    <location>
        <begin position="10"/>
        <end position="19"/>
    </location>
</feature>
<feature type="compositionally biased region" description="Basic and acidic residues" evidence="2">
    <location>
        <begin position="20"/>
        <end position="30"/>
    </location>
</feature>
<feature type="compositionally biased region" description="Basic residues" evidence="2">
    <location>
        <begin position="31"/>
        <end position="40"/>
    </location>
</feature>
<feature type="compositionally biased region" description="Polar residues" evidence="2">
    <location>
        <begin position="49"/>
        <end position="58"/>
    </location>
</feature>
<feature type="compositionally biased region" description="Acidic residues" evidence="2">
    <location>
        <begin position="147"/>
        <end position="159"/>
    </location>
</feature>
<feature type="compositionally biased region" description="Basic and acidic residues" evidence="2">
    <location>
        <begin position="160"/>
        <end position="169"/>
    </location>
</feature>
<dbReference type="EMBL" id="AE014075">
    <property type="protein sequence ID" value="AAN83244.1"/>
    <property type="molecule type" value="Genomic_DNA"/>
</dbReference>
<dbReference type="RefSeq" id="WP_001305065.1">
    <property type="nucleotide sequence ID" value="NZ_CP051263.1"/>
</dbReference>
<dbReference type="SMR" id="Q8FBG9"/>
<dbReference type="STRING" id="199310.c4815"/>
<dbReference type="KEGG" id="ecc:c4815"/>
<dbReference type="eggNOG" id="COG3078">
    <property type="taxonomic scope" value="Bacteria"/>
</dbReference>
<dbReference type="HOGENOM" id="CLU_094104_2_0_6"/>
<dbReference type="BioCyc" id="ECOL199310:C4815-MONOMER"/>
<dbReference type="Proteomes" id="UP000001410">
    <property type="component" value="Chromosome"/>
</dbReference>
<dbReference type="GO" id="GO:0005096">
    <property type="term" value="F:GTPase activator activity"/>
    <property type="evidence" value="ECO:0007669"/>
    <property type="project" value="UniProtKB-KW"/>
</dbReference>
<dbReference type="GO" id="GO:0042254">
    <property type="term" value="P:ribosome biogenesis"/>
    <property type="evidence" value="ECO:0007669"/>
    <property type="project" value="UniProtKB-KW"/>
</dbReference>
<dbReference type="HAMAP" id="MF_01058">
    <property type="entry name" value="GAP_YihI"/>
    <property type="match status" value="1"/>
</dbReference>
<dbReference type="InterPro" id="IPR007336">
    <property type="entry name" value="YihI"/>
</dbReference>
<dbReference type="NCBIfam" id="NF003560">
    <property type="entry name" value="PRK05244.1-1"/>
    <property type="match status" value="1"/>
</dbReference>
<dbReference type="Pfam" id="PF04220">
    <property type="entry name" value="YihI"/>
    <property type="match status" value="1"/>
</dbReference>
<gene>
    <name evidence="1" type="primary">yihI</name>
    <name type="ordered locus">c4815</name>
</gene>
<sequence length="169" mass="19029">MKPSSSNSRSKGHAKARRKTREELDQEARDRKRQKKRRGHAPGSRAAGGNTTSGSKGQNAPKDPRIGSKTPIPLGVAEKVTKQHKPKSEKPMLSPQAELELLETDERLDALLERLEAGETLSAEEQSWVDAKLDRIDELMQKLGLSYDDDEEEEEDEKQEDMMRLLRGN</sequence>
<protein>
    <recommendedName>
        <fullName evidence="1">Der GTPase-activating protein YihI</fullName>
    </recommendedName>
</protein>
<keyword id="KW-0343">GTPase activation</keyword>
<keyword id="KW-1185">Reference proteome</keyword>
<keyword id="KW-0690">Ribosome biogenesis</keyword>
<accession>Q8FBG9</accession>
<organism>
    <name type="scientific">Escherichia coli O6:H1 (strain CFT073 / ATCC 700928 / UPEC)</name>
    <dbReference type="NCBI Taxonomy" id="199310"/>
    <lineage>
        <taxon>Bacteria</taxon>
        <taxon>Pseudomonadati</taxon>
        <taxon>Pseudomonadota</taxon>
        <taxon>Gammaproteobacteria</taxon>
        <taxon>Enterobacterales</taxon>
        <taxon>Enterobacteriaceae</taxon>
        <taxon>Escherichia</taxon>
    </lineage>
</organism>
<comment type="function">
    <text evidence="1">A GTPase-activating protein (GAP) that modifies Der/EngA GTPase function. May play a role in ribosome biogenesis.</text>
</comment>
<comment type="subunit">
    <text evidence="1">Interacts with Der.</text>
</comment>
<comment type="similarity">
    <text evidence="1">Belongs to the YihI family.</text>
</comment>
<reference key="1">
    <citation type="journal article" date="2002" name="Proc. Natl. Acad. Sci. U.S.A.">
        <title>Extensive mosaic structure revealed by the complete genome sequence of uropathogenic Escherichia coli.</title>
        <authorList>
            <person name="Welch R.A."/>
            <person name="Burland V."/>
            <person name="Plunkett G. III"/>
            <person name="Redford P."/>
            <person name="Roesch P."/>
            <person name="Rasko D."/>
            <person name="Buckles E.L."/>
            <person name="Liou S.-R."/>
            <person name="Boutin A."/>
            <person name="Hackett J."/>
            <person name="Stroud D."/>
            <person name="Mayhew G.F."/>
            <person name="Rose D.J."/>
            <person name="Zhou S."/>
            <person name="Schwartz D.C."/>
            <person name="Perna N.T."/>
            <person name="Mobley H.L.T."/>
            <person name="Donnenberg M.S."/>
            <person name="Blattner F.R."/>
        </authorList>
    </citation>
    <scope>NUCLEOTIDE SEQUENCE [LARGE SCALE GENOMIC DNA]</scope>
    <source>
        <strain>CFT073 / ATCC 700928 / UPEC</strain>
    </source>
</reference>
<proteinExistence type="inferred from homology"/>
<name>YIHI_ECOL6</name>